<sequence>MKKKFIKMLCSIAIGCMISTSYSIKVSAFSNGNTKTNPNGEFKSLSLNSTNPYKTKYSFNDLNKLSNKEILDLTSKIKWSDISDLFQYNKDSYTFYSNKERVQALIDGLYEKGCNYTSTDDKGIDTLVEILRSGFYLGYYNDSLKYLNDKSFKDKCIPAMIAIENNKNFKLGENGQDTVVHALGKLIGNTSCNDEVVNKTIPILEQYYNEIDKYSKDRLKSNAVYNFMKEINYDISQYEYAHNIRDYKNTPWSGKIDSFIDTISKFASISNVTKDNGWIINNSIYYTAKLSKYHSNPSIPHSVIDNCIEIFPDYSEQYFTAIEAIKEDFNSRDSKGNVIDINKLIEEGKKHYLPKTYTFDNGKIIIKAGDKVEESKIQKLYWASKEVKSQFHRIIGNDKPLEVGNADDILTIVIYNNPEEYKLNKTLYGYSVDNGGIYIEGIGTFFTYERTPQESIYSLEELFRHEFTHYLQGRYLIPGLFNKGDFYKGNNGRITWFEEGSAEFFAGSTRTSVLPRKSMVGGLSKNPKERFNADKLLHSKYSDGWDFYKYGYAFSDYMYNNNKKLFSDLVSTMKNNDVKGYEALIEESSKDSKINKDYEYHMENLVNNYDNYTIPLVSDDYMKQYDNKSLHEIKSDIEKAMDVKNSQITKESSQYFDTYNLKATYTLSSNKGEISNWNYMNNKINEALNKLDNLSWGGYKTVTAYFSNPRLNSNNEVVYDIVFHGLLSHNKNSNEKVEVKEEPEIKDKDSFENVIYEKENNDSFDKANKIHKNQIVMATLDTEDYRDTFYFDALTSGSIDITIENIHGNSDAFNWLVYNDEDLNNYIAYPTKKEDNKLMGSFKVHKPGRYYILVYKTSLNKVNYKLNISDATNMAPVIKKIHEKENNDSFETANKITLDTLVLGNLDYKDVSDIYSFDIENTKDLNIKLTNLNNLGIAWNLYKESDLNNYIAYGAKSDNAIVGKCNLSPGKYYLYVYKYSGDKGNYSVIIN</sequence>
<evidence type="ECO:0000250" key="1">
    <source>
        <dbReference type="UniProtKB" id="Q9X721"/>
    </source>
</evidence>
<evidence type="ECO:0000255" key="2"/>
<evidence type="ECO:0000255" key="3">
    <source>
        <dbReference type="PROSITE-ProRule" id="PRU10095"/>
    </source>
</evidence>
<evidence type="ECO:0000269" key="4">
    <source>
    </source>
</evidence>
<evidence type="ECO:0000269" key="5">
    <source>
    </source>
</evidence>
<evidence type="ECO:0000269" key="6">
    <source>
    </source>
</evidence>
<evidence type="ECO:0000269" key="7">
    <source>
    </source>
</evidence>
<evidence type="ECO:0000303" key="8">
    <source>
    </source>
</evidence>
<evidence type="ECO:0000303" key="9">
    <source>
    </source>
</evidence>
<evidence type="ECO:0000305" key="10"/>
<evidence type="ECO:0000305" key="11">
    <source>
    </source>
</evidence>
<evidence type="ECO:0000305" key="12">
    <source>
    </source>
</evidence>
<evidence type="ECO:0007744" key="13">
    <source>
        <dbReference type="PDB" id="4AR8"/>
    </source>
</evidence>
<evidence type="ECO:0007744" key="14">
    <source>
        <dbReference type="PDB" id="4AR9"/>
    </source>
</evidence>
<evidence type="ECO:0007829" key="15">
    <source>
        <dbReference type="PDB" id="4AR9"/>
    </source>
</evidence>
<proteinExistence type="evidence at protein level"/>
<organism>
    <name type="scientific">Clostridium tetani (strain Massachusetts / E88)</name>
    <dbReference type="NCBI Taxonomy" id="212717"/>
    <lineage>
        <taxon>Bacteria</taxon>
        <taxon>Bacillati</taxon>
        <taxon>Bacillota</taxon>
        <taxon>Clostridia</taxon>
        <taxon>Eubacteriales</taxon>
        <taxon>Clostridiaceae</taxon>
        <taxon>Clostridium</taxon>
    </lineage>
</organism>
<gene>
    <name evidence="8" type="primary">colT</name>
    <name type="ordered locus">CTC_p33</name>
</gene>
<feature type="signal peptide" evidence="2">
    <location>
        <begin position="1"/>
        <end position="28"/>
    </location>
</feature>
<feature type="propeptide" id="PRO_0000443548" evidence="9">
    <location>
        <begin position="29"/>
        <end position="52"/>
    </location>
</feature>
<feature type="chain" id="PRO_5004302093" description="Collagenase ColT">
    <location>
        <begin position="53"/>
        <end position="991"/>
    </location>
</feature>
<feature type="region of interest" description="S1 metalloprotease domain, degrades FALGPA (furylacryloyl-Leu-Gly-Pro-Ala)" evidence="11 12">
    <location>
        <begin position="53"/>
        <end position="727"/>
    </location>
</feature>
<feature type="region of interest" description="Activator domain" evidence="12">
    <location>
        <begin position="57"/>
        <end position="330"/>
    </location>
</feature>
<feature type="region of interest" description="Catalytic subdomain" evidence="12">
    <location>
        <begin position="340"/>
        <end position="611"/>
    </location>
</feature>
<feature type="region of interest" description="Helper subdomain" evidence="12">
    <location>
        <begin position="619"/>
        <end position="731"/>
    </location>
</feature>
<feature type="region of interest" description="Collagen-binding domain 1" evidence="11 12">
    <location>
        <begin position="755"/>
        <end position="870"/>
    </location>
</feature>
<feature type="region of interest" description="Collagen-binding domain 2" evidence="11 12">
    <location>
        <begin position="878"/>
        <end position="991"/>
    </location>
</feature>
<feature type="active site" evidence="3">
    <location>
        <position position="466"/>
    </location>
</feature>
<feature type="binding site" evidence="5 13 14">
    <location>
        <position position="440"/>
    </location>
    <ligand>
        <name>Ca(2+)</name>
        <dbReference type="ChEBI" id="CHEBI:29108"/>
        <label>1</label>
    </ligand>
</feature>
<feature type="binding site" evidence="3 5 13 14">
    <location>
        <position position="465"/>
    </location>
    <ligand>
        <name>Zn(2+)</name>
        <dbReference type="ChEBI" id="CHEBI:29105"/>
        <note>catalytic</note>
    </ligand>
</feature>
<feature type="binding site" evidence="3 5 13 14">
    <location>
        <position position="469"/>
    </location>
    <ligand>
        <name>Zn(2+)</name>
        <dbReference type="ChEBI" id="CHEBI:29105"/>
        <note>catalytic</note>
    </ligand>
</feature>
<feature type="binding site" evidence="5 13 14">
    <location>
        <position position="473"/>
    </location>
    <ligand>
        <name>Ca(2+)</name>
        <dbReference type="ChEBI" id="CHEBI:29108"/>
        <label>1</label>
    </ligand>
</feature>
<feature type="binding site" evidence="5 13 14">
    <location>
        <position position="477"/>
    </location>
    <ligand>
        <name>Ca(2+)</name>
        <dbReference type="ChEBI" id="CHEBI:29108"/>
        <label>1</label>
    </ligand>
</feature>
<feature type="binding site" evidence="5 13 14">
    <location>
        <position position="479"/>
    </location>
    <ligand>
        <name>Ca(2+)</name>
        <dbReference type="ChEBI" id="CHEBI:29108"/>
        <label>1</label>
    </ligand>
</feature>
<feature type="binding site" evidence="5 13 14">
    <location>
        <position position="499"/>
    </location>
    <ligand>
        <name>Zn(2+)</name>
        <dbReference type="ChEBI" id="CHEBI:29105"/>
        <note>catalytic</note>
    </ligand>
</feature>
<feature type="binding site" evidence="1">
    <location>
        <position position="757"/>
    </location>
    <ligand>
        <name>Ca(2+)</name>
        <dbReference type="ChEBI" id="CHEBI:29108"/>
        <label>2</label>
    </ligand>
</feature>
<feature type="binding site" evidence="1">
    <location>
        <position position="759"/>
    </location>
    <ligand>
        <name>Ca(2+)</name>
        <dbReference type="ChEBI" id="CHEBI:29108"/>
        <label>2</label>
    </ligand>
</feature>
<feature type="binding site" evidence="1">
    <location>
        <position position="759"/>
    </location>
    <ligand>
        <name>Ca(2+)</name>
        <dbReference type="ChEBI" id="CHEBI:29108"/>
        <label>3</label>
    </ligand>
</feature>
<feature type="binding site" evidence="1">
    <location>
        <position position="761"/>
    </location>
    <ligand>
        <name>Ca(2+)</name>
        <dbReference type="ChEBI" id="CHEBI:29108"/>
        <label>3</label>
    </ligand>
</feature>
<feature type="binding site" evidence="1">
    <location>
        <position position="784"/>
    </location>
    <ligand>
        <name>Ca(2+)</name>
        <dbReference type="ChEBI" id="CHEBI:29108"/>
        <label>2</label>
    </ligand>
</feature>
<feature type="binding site" evidence="1">
    <location>
        <position position="784"/>
    </location>
    <ligand>
        <name>Ca(2+)</name>
        <dbReference type="ChEBI" id="CHEBI:29108"/>
        <label>3</label>
    </ligand>
</feature>
<feature type="binding site" evidence="1">
    <location>
        <position position="787"/>
    </location>
    <ligand>
        <name>Ca(2+)</name>
        <dbReference type="ChEBI" id="CHEBI:29108"/>
        <label>2</label>
    </ligand>
</feature>
<feature type="binding site" evidence="1">
    <location>
        <position position="787"/>
    </location>
    <ligand>
        <name>Ca(2+)</name>
        <dbReference type="ChEBI" id="CHEBI:29108"/>
        <label>3</label>
    </ligand>
</feature>
<feature type="binding site" evidence="1">
    <location>
        <position position="883"/>
    </location>
    <ligand>
        <name>Ca(2+)</name>
        <dbReference type="ChEBI" id="CHEBI:29108"/>
        <label>4</label>
    </ligand>
</feature>
<feature type="binding site" evidence="1">
    <location>
        <position position="885"/>
    </location>
    <ligand>
        <name>Ca(2+)</name>
        <dbReference type="ChEBI" id="CHEBI:29108"/>
        <label>4</label>
    </ligand>
</feature>
<feature type="binding site" evidence="1">
    <location>
        <position position="885"/>
    </location>
    <ligand>
        <name>Ca(2+)</name>
        <dbReference type="ChEBI" id="CHEBI:29108"/>
        <label>5</label>
    </ligand>
</feature>
<feature type="binding site" evidence="1">
    <location>
        <position position="887"/>
    </location>
    <ligand>
        <name>Ca(2+)</name>
        <dbReference type="ChEBI" id="CHEBI:29108"/>
        <label>5</label>
    </ligand>
</feature>
<feature type="binding site" evidence="1">
    <location>
        <position position="888"/>
    </location>
    <ligand>
        <name>Ca(2+)</name>
        <dbReference type="ChEBI" id="CHEBI:29108"/>
        <label>5</label>
    </ligand>
</feature>
<feature type="binding site" evidence="1">
    <location>
        <position position="910"/>
    </location>
    <ligand>
        <name>Ca(2+)</name>
        <dbReference type="ChEBI" id="CHEBI:29108"/>
        <label>4</label>
    </ligand>
</feature>
<feature type="binding site" evidence="1">
    <location>
        <position position="910"/>
    </location>
    <ligand>
        <name>Ca(2+)</name>
        <dbReference type="ChEBI" id="CHEBI:29108"/>
        <label>5</label>
    </ligand>
</feature>
<feature type="binding site" evidence="1">
    <location>
        <position position="913"/>
    </location>
    <ligand>
        <name>Ca(2+)</name>
        <dbReference type="ChEBI" id="CHEBI:29108"/>
        <label>4</label>
    </ligand>
</feature>
<feature type="binding site" evidence="1">
    <location>
        <position position="913"/>
    </location>
    <ligand>
        <name>Ca(2+)</name>
        <dbReference type="ChEBI" id="CHEBI:29108"/>
        <label>5</label>
    </ligand>
</feature>
<feature type="helix" evidence="15">
    <location>
        <begin position="341"/>
        <end position="352"/>
    </location>
</feature>
<feature type="strand" evidence="15">
    <location>
        <begin position="355"/>
        <end position="359"/>
    </location>
</feature>
<feature type="turn" evidence="15">
    <location>
        <begin position="360"/>
        <end position="363"/>
    </location>
</feature>
<feature type="strand" evidence="15">
    <location>
        <begin position="364"/>
        <end position="368"/>
    </location>
</feature>
<feature type="helix" evidence="15">
    <location>
        <begin position="374"/>
        <end position="395"/>
    </location>
</feature>
<feature type="strand" evidence="15">
    <location>
        <begin position="401"/>
        <end position="404"/>
    </location>
</feature>
<feature type="helix" evidence="15">
    <location>
        <begin position="406"/>
        <end position="408"/>
    </location>
</feature>
<feature type="strand" evidence="15">
    <location>
        <begin position="409"/>
        <end position="417"/>
    </location>
</feature>
<feature type="helix" evidence="15">
    <location>
        <begin position="418"/>
        <end position="421"/>
    </location>
</feature>
<feature type="helix" evidence="15">
    <location>
        <begin position="424"/>
        <end position="427"/>
    </location>
</feature>
<feature type="strand" evidence="15">
    <location>
        <begin position="433"/>
        <end position="439"/>
    </location>
</feature>
<feature type="helix" evidence="15">
    <location>
        <begin position="440"/>
        <end position="442"/>
    </location>
</feature>
<feature type="strand" evidence="15">
    <location>
        <begin position="444"/>
        <end position="448"/>
    </location>
</feature>
<feature type="turn" evidence="15">
    <location>
        <begin position="452"/>
        <end position="454"/>
    </location>
</feature>
<feature type="helix" evidence="15">
    <location>
        <begin position="459"/>
        <end position="475"/>
    </location>
</feature>
<feature type="turn" evidence="15">
    <location>
        <begin position="481"/>
        <end position="483"/>
    </location>
</feature>
<feature type="helix" evidence="15">
    <location>
        <begin position="485"/>
        <end position="487"/>
    </location>
</feature>
<feature type="strand" evidence="15">
    <location>
        <begin position="488"/>
        <end position="490"/>
    </location>
</feature>
<feature type="turn" evidence="15">
    <location>
        <begin position="491"/>
        <end position="494"/>
    </location>
</feature>
<feature type="helix" evidence="15">
    <location>
        <begin position="495"/>
        <end position="505"/>
    </location>
</feature>
<feature type="helix" evidence="15">
    <location>
        <begin position="517"/>
        <end position="520"/>
    </location>
</feature>
<feature type="helix" evidence="15">
    <location>
        <begin position="527"/>
        <end position="529"/>
    </location>
</feature>
<feature type="helix" evidence="15">
    <location>
        <begin position="533"/>
        <end position="537"/>
    </location>
</feature>
<feature type="helix" evidence="15">
    <location>
        <begin position="541"/>
        <end position="543"/>
    </location>
</feature>
<feature type="helix" evidence="15">
    <location>
        <begin position="547"/>
        <end position="561"/>
    </location>
</feature>
<feature type="helix" evidence="15">
    <location>
        <begin position="563"/>
        <end position="574"/>
    </location>
</feature>
<feature type="helix" evidence="15">
    <location>
        <begin position="578"/>
        <end position="589"/>
    </location>
</feature>
<feature type="helix" evidence="15">
    <location>
        <begin position="592"/>
        <end position="607"/>
    </location>
</feature>
<feature type="helix" evidence="15">
    <location>
        <begin position="609"/>
        <end position="611"/>
    </location>
</feature>
<feature type="helix" evidence="15">
    <location>
        <begin position="619"/>
        <end position="622"/>
    </location>
</feature>
<feature type="helix" evidence="15">
    <location>
        <begin position="630"/>
        <end position="641"/>
    </location>
</feature>
<feature type="strand" evidence="15">
    <location>
        <begin position="647"/>
        <end position="652"/>
    </location>
</feature>
<feature type="strand" evidence="15">
    <location>
        <begin position="654"/>
        <end position="666"/>
    </location>
</feature>
<feature type="helix" evidence="15">
    <location>
        <begin position="673"/>
        <end position="692"/>
    </location>
</feature>
<feature type="helix" evidence="15">
    <location>
        <begin position="697"/>
        <end position="701"/>
    </location>
</feature>
<feature type="strand" evidence="15">
    <location>
        <begin position="703"/>
        <end position="711"/>
    </location>
</feature>
<feature type="strand" evidence="15">
    <location>
        <begin position="717"/>
        <end position="729"/>
    </location>
</feature>
<geneLocation type="plasmid">
    <name>pE88</name>
</geneLocation>
<keyword id="KW-0002">3D-structure</keyword>
<keyword id="KW-0106">Calcium</keyword>
<keyword id="KW-0378">Hydrolase</keyword>
<keyword id="KW-0479">Metal-binding</keyword>
<keyword id="KW-0482">Metalloprotease</keyword>
<keyword id="KW-0614">Plasmid</keyword>
<keyword id="KW-0645">Protease</keyword>
<keyword id="KW-1185">Reference proteome</keyword>
<keyword id="KW-0677">Repeat</keyword>
<keyword id="KW-0964">Secreted</keyword>
<keyword id="KW-0732">Signal</keyword>
<keyword id="KW-0843">Virulence</keyword>
<keyword id="KW-0862">Zinc</keyword>
<keyword id="KW-0865">Zymogen</keyword>
<protein>
    <recommendedName>
        <fullName evidence="8">Collagenase ColT</fullName>
        <ecNumber evidence="6">3.4.24.3</ecNumber>
    </recommendedName>
    <alternativeName>
        <fullName>Microbial collagenase</fullName>
    </alternativeName>
</protein>
<name>COLT_CLOTE</name>
<comment type="function">
    <text evidence="1 4 5 6 7">Clostridial collagenases are among the most efficient degraders of eukaryotic collagen known; saprophytes use collagen as a carbon source while pathogens additionally digest collagen to aid in host colonization. Has both tripeptidylcarboxypeptidase on Gly-X-Y and endopeptidase activities; the endopeptidase cuts within the triple helix region of collagen while tripeptidylcarboxypeptidase successively digests the exposed ends, thus clostridial collagenases can digest large sections of collagen (By similarity). The activator domain (residues 57-330) and catalytic subdomain (340-611) open and close around substrate allowing digestion when the protein is closed (PubMed:23703618).</text>
</comment>
<comment type="catalytic activity">
    <reaction evidence="6 11 12">
        <text>Digestion of native collagen in the triple helical region at Xaa-|-Gly bonds. With synthetic peptides, a preference is shown for Gly at P3 and P1', Pro and Ala at P2 and P2', and hydroxyproline, Ala or Arg at P3'.</text>
        <dbReference type="EC" id="3.4.24.3"/>
    </reaction>
</comment>
<comment type="cofactor">
    <cofactor evidence="5">
        <name>Ca(2+)</name>
        <dbReference type="ChEBI" id="CHEBI:29108"/>
    </cofactor>
    <text evidence="10">Binds about 5 Ca(2+) per subunit (Probable). The metallopeptidase domain binds 1 Ca(2+), while each CDB binds 2 (Probable).</text>
</comment>
<comment type="cofactor">
    <cofactor evidence="5">
        <name>Zn(2+)</name>
        <dbReference type="ChEBI" id="CHEBI:29105"/>
    </cofactor>
    <text evidence="5">Binds 1 catalytic Zn(2+) per subunit.</text>
</comment>
<comment type="activity regulation">
    <text evidence="4 5 7">Partially inhibited by 1-10-phenanthroline; inactivation is irreversible (PubMed:18937627, PubMed:23703618). Partially inhibited by EDTA; inactivation is reversible (PubMed:23703618). Inhibited by broad-spectrum zinc metalloprotease inhibitor batimastat (PubMed:28820255). N-aryl mercaptoacetamide-based inhibitors have been isolated that act on clostridial collagenases with submicromolar affinity while having negligibile activity on human collagenases (PubMed:28820255).</text>
</comment>
<comment type="biophysicochemical properties">
    <kinetics>
        <KM evidence="4">0.97 mM for furylacryloyl-Leu-Gly-Pro-Ala (FALGPA)</KM>
        <Vmax evidence="4">5.53 umol/min/mg enzyme</Vmax>
        <text evidence="4">kcat is 7.24/sec, using a catalytic fragment (residues 53-727) on an artificial substrate.</text>
    </kinetics>
</comment>
<comment type="subcellular location">
    <subcellularLocation>
        <location evidence="1">Secreted</location>
    </subcellularLocation>
</comment>
<comment type="domain">
    <text evidence="5 11">The mature protein has 3 domains; a metalloprotease domain (S1, approximately residues 53 to 727) and 2 collagen-binding domains (CBD) (755-872) and (882-991) (PubMed:18937627). The metalloprotease S1 domain is composed of 3 subdomains which together resemble a saddle; an activator domain (residues 57-330), the catalytic peptidase subdomain (340-611) and a helper subdomain (619-731) (PubMed:23703618).</text>
</comment>
<comment type="biotechnology">
    <text evidence="7">N-aryl mercaptoacetamide-based inhibitors with submicromolar affinity for clostridial collagenases but negligibile activity on human collagenases have been discovered that may lead to promising anti-infective drugs against Clostridia (PubMed:28820255).</text>
</comment>
<comment type="similarity">
    <text>Belongs to the peptidase M9B family. Collagenase subfamily.</text>
</comment>
<accession>Q899Y1</accession>
<reference key="1">
    <citation type="journal article" date="2003" name="Proc. Natl. Acad. Sci. U.S.A.">
        <title>The genome sequence of Clostridium tetani, the causative agent of tetanus disease.</title>
        <authorList>
            <person name="Brueggemann H."/>
            <person name="Baeumer S."/>
            <person name="Fricke W.F."/>
            <person name="Wiezer A."/>
            <person name="Liesegang H."/>
            <person name="Decker I."/>
            <person name="Herzberg C."/>
            <person name="Martinez-Arias R."/>
            <person name="Merkl R."/>
            <person name="Henne A."/>
            <person name="Gottschalk G."/>
        </authorList>
    </citation>
    <scope>NUCLEOTIDE SEQUENCE [LARGE SCALE GENOMIC DNA]</scope>
    <source>
        <strain>Massachusetts / E88</strain>
    </source>
</reference>
<reference key="2">
    <citation type="journal article" date="2009" name="Biol. Chem.">
        <title>Biochemical characterization of the catalytic domains of three different Clostridial collagenases.</title>
        <authorList>
            <person name="Eckhard U."/>
            <person name="Schoenauer E."/>
            <person name="Ducka P."/>
            <person name="Briza P."/>
            <person name="Nuess D."/>
            <person name="Brandstetter H."/>
        </authorList>
    </citation>
    <scope>FUNCTION</scope>
    <scope>CATALYTIC ACTIVITY</scope>
    <scope>ACTIVITY REGULATION</scope>
    <scope>BIOPHYSICOCHEMICAL PROPERTIES</scope>
    <scope>DOMAIN</scope>
</reference>
<reference key="3">
    <citation type="journal article" date="2014" name="J. Proteomics">
        <title>Proteomic protease specificity profiling of clostridial collagenases reveals their intrinsic nature as dedicated degraders of collagen.</title>
        <authorList>
            <person name="Eckhard U."/>
            <person name="Huesgen P.F."/>
            <person name="Brandstetter H."/>
            <person name="Overall C.M."/>
        </authorList>
    </citation>
    <scope>FUNCTION</scope>
    <scope>CATALYTIC ACTIVITY</scope>
</reference>
<reference key="4">
    <citation type="journal article" date="2017" name="J. Am. Chem. Soc.">
        <title>Discovery of a potent inhibitor class with high selectivity toward clostridial collagenases.</title>
        <authorList>
            <person name="Schoenauer E."/>
            <person name="Kany A.M."/>
            <person name="Haupenthal J."/>
            <person name="Huesecken K."/>
            <person name="Hoppe I.J."/>
            <person name="Voos K."/>
            <person name="Yahiaoui S."/>
            <person name="Elsaesser B."/>
            <person name="Ducho C."/>
            <person name="Brandstetter H."/>
            <person name="Hartmann R.W."/>
        </authorList>
    </citation>
    <scope>FUNCTION</scope>
    <scope>ACTIVITY REGULATION</scope>
    <scope>BIOTECHNOLOGY FOR ANTI-INFECTIVE AGENTS</scope>
</reference>
<reference evidence="13 14" key="5">
    <citation type="journal article" date="2013" name="J. Biol. Chem.">
        <title>Structural basis for activity regulation and substrate preference of clostridial collagenases G, H, and T.</title>
        <authorList>
            <person name="Eckhard U."/>
            <person name="Schonauer E."/>
            <person name="Brandstetter H."/>
        </authorList>
    </citation>
    <scope>X-RAY CRYSTALLOGRAPHY (1.69 ANGSTROMS) OF 340-730 IN PRESENCE OR ABSENCE OF INHIBITOR AND IN COMPLEX WITH CALCIUM AND ZINC</scope>
    <scope>FUNCTION</scope>
    <scope>COFACTOR</scope>
    <scope>ACTIVITY REGULATION</scope>
    <scope>DOMAIN</scope>
</reference>
<dbReference type="EC" id="3.4.24.3" evidence="6"/>
<dbReference type="EMBL" id="AF528097">
    <property type="protein sequence ID" value="AAO37456.1"/>
    <property type="molecule type" value="Genomic_DNA"/>
</dbReference>
<dbReference type="RefSeq" id="WP_011100838.1">
    <property type="nucleotide sequence ID" value="NC_004565.1"/>
</dbReference>
<dbReference type="PDB" id="4AR8">
    <property type="method" value="X-ray"/>
    <property type="resolution" value="2.05 A"/>
    <property type="chains" value="A/B=340-730"/>
</dbReference>
<dbReference type="PDB" id="4AR9">
    <property type="method" value="X-ray"/>
    <property type="resolution" value="1.69 A"/>
    <property type="chains" value="A/B=340-730"/>
</dbReference>
<dbReference type="PDBsum" id="4AR8"/>
<dbReference type="PDBsum" id="4AR9"/>
<dbReference type="SMR" id="Q899Y1"/>
<dbReference type="MEROPS" id="M09.005"/>
<dbReference type="GeneID" id="24255242"/>
<dbReference type="KEGG" id="ctc:CTC_p33"/>
<dbReference type="HOGENOM" id="CLU_012279_0_0_9"/>
<dbReference type="OrthoDB" id="9798386at2"/>
<dbReference type="BRENDA" id="3.4.24.3">
    <property type="organism ID" value="1526"/>
</dbReference>
<dbReference type="EvolutionaryTrace" id="Q899Y1"/>
<dbReference type="Proteomes" id="UP000001412">
    <property type="component" value="Plasmid pE88"/>
</dbReference>
<dbReference type="GO" id="GO:0005576">
    <property type="term" value="C:extracellular region"/>
    <property type="evidence" value="ECO:0007669"/>
    <property type="project" value="UniProtKB-SubCell"/>
</dbReference>
<dbReference type="GO" id="GO:0005509">
    <property type="term" value="F:calcium ion binding"/>
    <property type="evidence" value="ECO:0000314"/>
    <property type="project" value="UniProtKB"/>
</dbReference>
<dbReference type="GO" id="GO:0004175">
    <property type="term" value="F:endopeptidase activity"/>
    <property type="evidence" value="ECO:0000314"/>
    <property type="project" value="UniProtKB"/>
</dbReference>
<dbReference type="GO" id="GO:0004222">
    <property type="term" value="F:metalloendopeptidase activity"/>
    <property type="evidence" value="ECO:0000315"/>
    <property type="project" value="UniProtKB"/>
</dbReference>
<dbReference type="GO" id="GO:0008270">
    <property type="term" value="F:zinc ion binding"/>
    <property type="evidence" value="ECO:0000314"/>
    <property type="project" value="UniProtKB"/>
</dbReference>
<dbReference type="GO" id="GO:0006508">
    <property type="term" value="P:proteolysis"/>
    <property type="evidence" value="ECO:0007669"/>
    <property type="project" value="UniProtKB-KW"/>
</dbReference>
<dbReference type="FunFam" id="1.10.390.20:FF:000001">
    <property type="entry name" value="Microbial collagenase"/>
    <property type="match status" value="1"/>
</dbReference>
<dbReference type="FunFam" id="2.60.120.380:FF:000012">
    <property type="entry name" value="Microbial collagenase"/>
    <property type="match status" value="1"/>
</dbReference>
<dbReference type="FunFam" id="3.40.30.160:FF:000001">
    <property type="entry name" value="Microbial collagenase"/>
    <property type="match status" value="1"/>
</dbReference>
<dbReference type="Gene3D" id="1.10.390.20">
    <property type="match status" value="1"/>
</dbReference>
<dbReference type="Gene3D" id="2.60.120.380">
    <property type="match status" value="2"/>
</dbReference>
<dbReference type="Gene3D" id="3.30.980.50">
    <property type="match status" value="1"/>
</dbReference>
<dbReference type="Gene3D" id="3.40.30.160">
    <property type="entry name" value="Collagenase ColT, N-terminal domain"/>
    <property type="match status" value="1"/>
</dbReference>
<dbReference type="InterPro" id="IPR041379">
    <property type="entry name" value="ColG_subdomain"/>
</dbReference>
<dbReference type="InterPro" id="IPR007280">
    <property type="entry name" value="Peptidase_C_arc/bac"/>
</dbReference>
<dbReference type="InterPro" id="IPR013661">
    <property type="entry name" value="Peptidase_M9_N_dom"/>
</dbReference>
<dbReference type="InterPro" id="IPR002169">
    <property type="entry name" value="Peptidase_M9A/M9B"/>
</dbReference>
<dbReference type="PANTHER" id="PTHR13062">
    <property type="entry name" value="COLLAGENASE"/>
    <property type="match status" value="1"/>
</dbReference>
<dbReference type="PANTHER" id="PTHR13062:SF9">
    <property type="entry name" value="MICROBIAL COLLAGENASE"/>
    <property type="match status" value="1"/>
</dbReference>
<dbReference type="Pfam" id="PF18496">
    <property type="entry name" value="ColG_sub"/>
    <property type="match status" value="1"/>
</dbReference>
<dbReference type="Pfam" id="PF01752">
    <property type="entry name" value="Peptidase_M9"/>
    <property type="match status" value="1"/>
</dbReference>
<dbReference type="Pfam" id="PF08453">
    <property type="entry name" value="Peptidase_M9_N"/>
    <property type="match status" value="1"/>
</dbReference>
<dbReference type="Pfam" id="PF04151">
    <property type="entry name" value="PPC"/>
    <property type="match status" value="2"/>
</dbReference>
<dbReference type="PRINTS" id="PR00931">
    <property type="entry name" value="MICOLLPTASE"/>
</dbReference>
<dbReference type="SUPFAM" id="SSF89260">
    <property type="entry name" value="Collagen-binding domain"/>
    <property type="match status" value="2"/>
</dbReference>
<dbReference type="PROSITE" id="PS00142">
    <property type="entry name" value="ZINC_PROTEASE"/>
    <property type="match status" value="1"/>
</dbReference>